<accession>Q5IF00</accession>
<evidence type="ECO:0000255" key="1"/>
<evidence type="ECO:0000256" key="2">
    <source>
        <dbReference type="SAM" id="MobiDB-lite"/>
    </source>
</evidence>
<evidence type="ECO:0000269" key="3">
    <source>
    </source>
</evidence>
<evidence type="ECO:0000305" key="4"/>
<comment type="function">
    <text evidence="3">Required for autophagic degradation of peroxisomes called pexophagy, but not essential for general autophagy. Involved in resistance to elevated pH.</text>
</comment>
<comment type="subcellular location">
    <subcellularLocation>
        <location evidence="3">Cytoplasm</location>
    </subcellularLocation>
    <subcellularLocation>
        <location evidence="3">Vacuole membrane</location>
        <topology evidence="3">Peripheral membrane protein</topology>
    </subcellularLocation>
    <subcellularLocation>
        <location evidence="3">Cytoplasmic vesicle membrane</location>
        <topology evidence="3">Peripheral membrane protein</topology>
    </subcellularLocation>
    <text>Concentration increases at the vacuolar and cytoplasmic vesicular membranes during the course of pexophagy.</text>
</comment>
<comment type="similarity">
    <text evidence="4">Belongs to the ATG28 family.</text>
</comment>
<dbReference type="EMBL" id="AY753207">
    <property type="protein sequence ID" value="AAW31632.1"/>
    <property type="molecule type" value="Genomic_DNA"/>
</dbReference>
<dbReference type="SMR" id="Q5IF00"/>
<dbReference type="GO" id="GO:0030659">
    <property type="term" value="C:cytoplasmic vesicle membrane"/>
    <property type="evidence" value="ECO:0007669"/>
    <property type="project" value="UniProtKB-SubCell"/>
</dbReference>
<dbReference type="GO" id="GO:0005774">
    <property type="term" value="C:vacuolar membrane"/>
    <property type="evidence" value="ECO:0007669"/>
    <property type="project" value="UniProtKB-SubCell"/>
</dbReference>
<dbReference type="GO" id="GO:0006914">
    <property type="term" value="P:autophagy"/>
    <property type="evidence" value="ECO:0007669"/>
    <property type="project" value="UniProtKB-KW"/>
</dbReference>
<dbReference type="GO" id="GO:0015031">
    <property type="term" value="P:protein transport"/>
    <property type="evidence" value="ECO:0007669"/>
    <property type="project" value="UniProtKB-KW"/>
</dbReference>
<proteinExistence type="inferred from homology"/>
<keyword id="KW-0072">Autophagy</keyword>
<keyword id="KW-0175">Coiled coil</keyword>
<keyword id="KW-0963">Cytoplasm</keyword>
<keyword id="KW-0968">Cytoplasmic vesicle</keyword>
<keyword id="KW-0472">Membrane</keyword>
<keyword id="KW-0653">Protein transport</keyword>
<keyword id="KW-0813">Transport</keyword>
<keyword id="KW-0926">Vacuole</keyword>
<name>ATG28_PICPA</name>
<organism>
    <name type="scientific">Komagataella pastoris</name>
    <name type="common">Yeast</name>
    <name type="synonym">Pichia pastoris</name>
    <dbReference type="NCBI Taxonomy" id="4922"/>
    <lineage>
        <taxon>Eukaryota</taxon>
        <taxon>Fungi</taxon>
        <taxon>Dikarya</taxon>
        <taxon>Ascomycota</taxon>
        <taxon>Saccharomycotina</taxon>
        <taxon>Pichiomycetes</taxon>
        <taxon>Pichiales</taxon>
        <taxon>Pichiaceae</taxon>
        <taxon>Komagataella</taxon>
    </lineage>
</organism>
<protein>
    <recommendedName>
        <fullName>Autophagy-related protein 28</fullName>
    </recommendedName>
</protein>
<gene>
    <name type="primary">ATG28</name>
</gene>
<sequence length="612" mass="69519">MICLFGNCNCQTGIFGLYDYVSFLYHSPSSCRVRLVLSLPASPNHMEEQSPKFESSFPRRTSEGPVDDVGKSPPASFYRELLANKAQQPQLSEDEEDHNPKDFLFKEDSEDELLIPDSENHNSSSTSPRKFKVENIRWGSDTLNGSILPLNSQGSNLQSLLSNVGELEHLLSKDVAKHSKYLKEQSSKVEKARANIVTNLTRLSLVLSSIFNTYQAKAQDKQAILDKIEEWEDEKKSLLDDMKEVLSTDDNADGETHKFLELASESINVENEIEALETRLKQLKIKQRTLKNECFQSQGIIESRLSNFVQAVEKIEMRERKSIEQVVQQLSENQLGYWNDNLALEVMNGLTINPGDISLVEEYEPVDILKQVESLEKPTIAADYHLPKNTNKQASRFTRQLLEFNYKCQPKLNVYPVVGLITKELKEDSAKEQEYKHRYDQVTHTLSALKDSFALIYHTEQQLQSITQSTQDLKDFQSLMNQMVESLLKTHSEADQYNLYLAKDVLAQEISIIHQALNKLNQSTEYSSVESDNVKNHDGLLFQTFSKAQERTKLPSIKSATSIRYAPSLYNSLSPTSTSKTTAKGEVNYDAGINKYTKVKEVLRSGKGNKDE</sequence>
<reference key="1">
    <citation type="journal article" date="2006" name="Autophagy">
        <title>Atg28, a novel coiled-coil protein involved in autophagic degradation of peroxisomes in the methylotrophic yeast Pichia pastoris.</title>
        <authorList>
            <person name="Stasyk O.V."/>
            <person name="Stasyk O.G."/>
            <person name="Mathewson R.D."/>
            <person name="Farre J.-C."/>
            <person name="Nazarko V.Y."/>
            <person name="Krasovska O.S."/>
            <person name="Subramani S."/>
            <person name="Cregg J.M."/>
            <person name="Sibirny A.A."/>
        </authorList>
    </citation>
    <scope>NUCLEOTIDE SEQUENCE [GENOMIC DNA]</scope>
    <scope>FUNCTION</scope>
    <scope>SUBCELLULAR LOCATION</scope>
</reference>
<feature type="chain" id="PRO_0000064729" description="Autophagy-related protein 28">
    <location>
        <begin position="1"/>
        <end position="612"/>
    </location>
</feature>
<feature type="region of interest" description="Disordered" evidence="2">
    <location>
        <begin position="44"/>
        <end position="72"/>
    </location>
</feature>
<feature type="coiled-coil region" evidence="1">
    <location>
        <begin position="214"/>
        <end position="296"/>
    </location>
</feature>